<organism>
    <name type="scientific">Potato virus Y (strain Chinese)</name>
    <name type="common">PVY</name>
    <dbReference type="NCBI Taxonomy" id="12218"/>
    <lineage>
        <taxon>Viruses</taxon>
        <taxon>Riboviria</taxon>
        <taxon>Orthornavirae</taxon>
        <taxon>Pisuviricota</taxon>
        <taxon>Stelpaviricetes</taxon>
        <taxon>Patatavirales</taxon>
        <taxon>Potyviridae</taxon>
        <taxon>Potyvirus</taxon>
        <taxon>Potyvirus yituberosi</taxon>
        <taxon>Potato virus Y</taxon>
    </lineage>
</organism>
<feature type="chain" id="PRO_0000040395" description="Nuclear inclusion protein B" evidence="1">
    <location>
        <begin position="1" status="less than"/>
        <end position="60"/>
    </location>
</feature>
<feature type="chain" id="PRO_0000420015" description="Genome polyprotein">
    <location>
        <begin position="1"/>
        <end position="327"/>
    </location>
</feature>
<feature type="chain" id="PRO_0000040396" description="Capsid protein" evidence="1">
    <location>
        <begin position="61"/>
        <end position="327"/>
    </location>
</feature>
<feature type="region of interest" description="Disordered" evidence="4">
    <location>
        <begin position="65"/>
        <end position="102"/>
    </location>
</feature>
<feature type="site" description="Cleavage; by NIa-pro" evidence="1">
    <location>
        <begin position="60"/>
        <end position="61"/>
    </location>
</feature>
<feature type="non-terminal residue">
    <location>
        <position position="1"/>
    </location>
</feature>
<name>POLG_PVYCH</name>
<dbReference type="EC" id="2.7.7.48"/>
<dbReference type="EMBL" id="X54058">
    <property type="protein sequence ID" value="CAA37993.1"/>
    <property type="molecule type" value="Genomic_RNA"/>
</dbReference>
<dbReference type="PIR" id="S11435">
    <property type="entry name" value="S11435"/>
</dbReference>
<dbReference type="SMR" id="P21294"/>
<dbReference type="GO" id="GO:0019028">
    <property type="term" value="C:viral capsid"/>
    <property type="evidence" value="ECO:0007669"/>
    <property type="project" value="UniProtKB-KW"/>
</dbReference>
<dbReference type="GO" id="GO:0003968">
    <property type="term" value="F:RNA-directed RNA polymerase activity"/>
    <property type="evidence" value="ECO:0007669"/>
    <property type="project" value="UniProtKB-KW"/>
</dbReference>
<dbReference type="InterPro" id="IPR001592">
    <property type="entry name" value="Poty_coat"/>
</dbReference>
<dbReference type="Pfam" id="PF00767">
    <property type="entry name" value="Poty_coat"/>
    <property type="match status" value="1"/>
</dbReference>
<comment type="function">
    <molecule>Nuclear inclusion protein B</molecule>
    <text>An RNA-dependent RNA polymerase that plays an essential role in the virus replication.</text>
</comment>
<comment type="function">
    <molecule>Capsid protein</molecule>
    <text evidence="2">Involved in aphid transmission, cell-to-cell and systemis movement, encapsidation of the viral RNA and in the regulation of viral RNA amplification.</text>
</comment>
<comment type="catalytic activity">
    <reaction evidence="3">
        <text>RNA(n) + a ribonucleoside 5'-triphosphate = RNA(n+1) + diphosphate</text>
        <dbReference type="Rhea" id="RHEA:21248"/>
        <dbReference type="Rhea" id="RHEA-COMP:14527"/>
        <dbReference type="Rhea" id="RHEA-COMP:17342"/>
        <dbReference type="ChEBI" id="CHEBI:33019"/>
        <dbReference type="ChEBI" id="CHEBI:61557"/>
        <dbReference type="ChEBI" id="CHEBI:140395"/>
        <dbReference type="EC" id="2.7.7.48"/>
    </reaction>
</comment>
<comment type="subcellular location">
    <molecule>Capsid protein</molecule>
    <subcellularLocation>
        <location evidence="5">Virion</location>
    </subcellularLocation>
</comment>
<comment type="PTM">
    <text evidence="1">Genome polyprotein of potyviruses undergoes post-translational proteolytic processing by the main proteinase NIa-pro resulting in the production of at least ten individual proteins. The P1 proteinase and the HC-pro cleave only their respective C-termini autocatalytically. 6K1 is essential for proper proteolytic separation of P3 from CI (By similarity).</text>
</comment>
<comment type="similarity">
    <text evidence="5">Belongs to the potyviridae genome polyprotein family.</text>
</comment>
<protein>
    <recommendedName>
        <fullName>Genome polyprotein</fullName>
    </recommendedName>
    <component>
        <recommendedName>
            <fullName>Nuclear inclusion protein B</fullName>
            <shortName>NI-B</shortName>
            <shortName>NIB</shortName>
        </recommendedName>
        <alternativeName>
            <fullName>RNA-directed RNA polymerase</fullName>
            <ecNumber>2.7.7.48</ecNumber>
        </alternativeName>
    </component>
    <component>
        <recommendedName>
            <fullName>Capsid protein</fullName>
            <shortName>CP</shortName>
        </recommendedName>
        <alternativeName>
            <fullName>Coat protein</fullName>
        </alternativeName>
    </component>
</protein>
<evidence type="ECO:0000250" key="1"/>
<evidence type="ECO:0000250" key="2">
    <source>
        <dbReference type="UniProtKB" id="P04517"/>
    </source>
</evidence>
<evidence type="ECO:0000255" key="3">
    <source>
        <dbReference type="PROSITE-ProRule" id="PRU00539"/>
    </source>
</evidence>
<evidence type="ECO:0000256" key="4">
    <source>
        <dbReference type="SAM" id="MobiDB-lite"/>
    </source>
</evidence>
<evidence type="ECO:0000305" key="5"/>
<keyword id="KW-0167">Capsid protein</keyword>
<keyword id="KW-0548">Nucleotidyltransferase</keyword>
<keyword id="KW-0696">RNA-directed RNA polymerase</keyword>
<keyword id="KW-0808">Transferase</keyword>
<keyword id="KW-0946">Virion</keyword>
<reference key="1">
    <citation type="journal article" date="1990" name="Nucleic Acids Res.">
        <title>cDNA sequence of the 3'-coding region of PVY genome (the Chinese isolate).</title>
        <authorList>
            <person name="Zhou X.R."/>
            <person name="Fang R.X."/>
            <person name="Wang C.Q."/>
            <person name="Mang K.Q."/>
        </authorList>
    </citation>
    <scope>NUCLEOTIDE SEQUENCE [GENOMIC RNA]</scope>
</reference>
<reference key="2">
    <citation type="journal article" date="2001" name="Virus Res.">
        <title>Potyvirus proteins: a wealth of functions.</title>
        <authorList>
            <person name="Urcuqui-Inchima S."/>
            <person name="Haenni A.L."/>
            <person name="Bernardi F."/>
        </authorList>
    </citation>
    <scope>REVIEW</scope>
</reference>
<accession>P21294</accession>
<sequence length="327" mass="36868">QQQPFATIAQEGKAPYIASMALRKLYMDRAVDEEELRAFTEMMVALDDEFEFDSYEVHHQANDTIDAVGDNKKDAKPEQGSIQSNPNKGKEKDVNAGTSGTHTVPRIKAITPKMRMPKSKGATVLNLEHLLEYAPQQIDISNTRATQSQFDTWYEAVRMAYDIGETEMPTVMNGLMVWCIENGTSPNVNGVWVMMDGNEQVGYPLKPIVENAKPTLRQIMAHFSDVAEAYIEMRNKKEPYMPRYGLIRNLRDVGLARYAFDFYEVTSRTPVRAREAHIQMKAAALKSAQPRLFGLDGGISTQEENTERHTTEDVSPSMHTLLGVKNM</sequence>
<organismHost>
    <name type="scientific">Capsicum</name>
    <name type="common">peppers</name>
    <dbReference type="NCBI Taxonomy" id="4071"/>
</organismHost>
<organismHost>
    <name type="scientific">Nicotiana</name>
    <dbReference type="NCBI Taxonomy" id="4085"/>
</organismHost>
<organismHost>
    <name type="scientific">Solanum lycopersicum</name>
    <name type="common">Tomato</name>
    <name type="synonym">Lycopersicon esculentum</name>
    <dbReference type="NCBI Taxonomy" id="4081"/>
</organismHost>
<organismHost>
    <name type="scientific">Solanum tuberosum</name>
    <name type="common">Potato</name>
    <dbReference type="NCBI Taxonomy" id="4113"/>
</organismHost>
<proteinExistence type="inferred from homology"/>